<accession>B0WR18</accession>
<keyword id="KW-0963">Cytoplasm</keyword>
<keyword id="KW-0396">Initiation factor</keyword>
<keyword id="KW-0648">Protein biosynthesis</keyword>
<keyword id="KW-1185">Reference proteome</keyword>
<sequence>MYSNDDYAEGGYEEYGYEMAADDGYDRSFYPMHEDVKKFLVYFCSVIKGGVVYEIQNLYENTFPKLSEQHFEKKAWPSEDEVAHLVDNDNLFMILYKELYYRHLHARIQGGPSLEQRLNSFYNYCNFFNYILPSKEPVQLELPDIWLWELIDEFVYQFQNFAQYRARLTDKSDEEMDMLLNNNSKVWNILCILNVLHSLVSMSKIKDQLEAAAAGRDPEEVAGEFGRHSFYKMLGYFSLVGLLRVHSLLGDYHQAIKVLEPIELHKKSQYSHIPACQISTSYYVGFAYMMMRRYSDAIRTFSSILLYIQRTKQLYSARSYQNDQINKQTDQMYHLLAICLVLHPQCIDESIQQVLREKNYHDNMYKMQCGDLDTFRNFFVFACPKFVSPVPPPSDAPLDDYVKEALEHQTNVFMDEVRQQQELPTIRSYLKLYTTLPLLKLASFMDHIPQDEIGEQKIENLLTHLLCFKHKMKNIVWTKGASGLEGKFQSGSELDFYIDKDMIHIADTKVSHRYGDFFIRKILKFEDLNRRLHNLKG</sequence>
<proteinExistence type="inferred from homology"/>
<gene>
    <name type="ORF">CPIJ009242</name>
</gene>
<name>EIF3L_CULQU</name>
<comment type="function">
    <text evidence="1">Component of the eukaryotic translation initiation factor 3 (eIF-3) complex, which is involved in protein synthesis of a specialized repertoire of mRNAs and, together with other initiation factors, stimulates binding of mRNA and methionyl-tRNAi to the 40S ribosome. The eIF-3 complex specifically targets and initiates translation of a subset of mRNAs involved in cell proliferation.</text>
</comment>
<comment type="subunit">
    <text evidence="1">Component of the eukaryotic translation initiation factor 3 (eIF-3) complex.</text>
</comment>
<comment type="subcellular location">
    <subcellularLocation>
        <location evidence="1">Cytoplasm</location>
    </subcellularLocation>
</comment>
<comment type="similarity">
    <text evidence="1">Belongs to the eIF-3 subunit L family.</text>
</comment>
<reference key="1">
    <citation type="submission" date="2007-03" db="EMBL/GenBank/DDBJ databases">
        <title>Annotation of Culex pipiens quinquefasciatus.</title>
        <authorList>
            <consortium name="The Broad Institute Genome Sequencing Platform"/>
            <person name="Atkinson P.W."/>
            <person name="Hemingway J."/>
            <person name="Christensen B.M."/>
            <person name="Higgs S."/>
            <person name="Kodira C.D."/>
            <person name="Hannick L.I."/>
            <person name="Megy K."/>
            <person name="O'Leary S.B."/>
            <person name="Pearson M."/>
            <person name="Haas B.J."/>
            <person name="Mauceli E."/>
            <person name="Wortman J.R."/>
            <person name="Lee N.H."/>
            <person name="Guigo R."/>
            <person name="Stanke M."/>
            <person name="Alvarado L."/>
            <person name="Amedeo P."/>
            <person name="Antoine C.H."/>
            <person name="Arensburger P."/>
            <person name="Bidwell S.L."/>
            <person name="Crawford M."/>
            <person name="Camaro F."/>
            <person name="Devon K."/>
            <person name="Engels R."/>
            <person name="Hammond M."/>
            <person name="Howarth C."/>
            <person name="Koehrsen M."/>
            <person name="Lawson D."/>
            <person name="Montgomery P."/>
            <person name="Nene V."/>
            <person name="Nusbaum C."/>
            <person name="Puiu D."/>
            <person name="Romero-Severson J."/>
            <person name="Severson D.W."/>
            <person name="Shumway M."/>
            <person name="Sisk P."/>
            <person name="Stolte C."/>
            <person name="Zeng Q."/>
            <person name="Eisenstadt E."/>
            <person name="Fraser-Liggett C.M."/>
            <person name="Strausberg R."/>
            <person name="Galagan J."/>
            <person name="Birren B."/>
            <person name="Collins F.H."/>
        </authorList>
    </citation>
    <scope>NUCLEOTIDE SEQUENCE [LARGE SCALE GENOMIC DNA]</scope>
    <source>
        <strain>JHB</strain>
    </source>
</reference>
<protein>
    <recommendedName>
        <fullName evidence="1">Eukaryotic translation initiation factor 3 subunit L</fullName>
        <shortName evidence="1">eIF3l</shortName>
    </recommendedName>
</protein>
<evidence type="ECO:0000255" key="1">
    <source>
        <dbReference type="HAMAP-Rule" id="MF_03011"/>
    </source>
</evidence>
<evidence type="ECO:0000255" key="2">
    <source>
        <dbReference type="PROSITE-ProRule" id="PRU01185"/>
    </source>
</evidence>
<organism>
    <name type="scientific">Culex quinquefasciatus</name>
    <name type="common">Southern house mosquito</name>
    <name type="synonym">Culex pungens</name>
    <dbReference type="NCBI Taxonomy" id="7176"/>
    <lineage>
        <taxon>Eukaryota</taxon>
        <taxon>Metazoa</taxon>
        <taxon>Ecdysozoa</taxon>
        <taxon>Arthropoda</taxon>
        <taxon>Hexapoda</taxon>
        <taxon>Insecta</taxon>
        <taxon>Pterygota</taxon>
        <taxon>Neoptera</taxon>
        <taxon>Endopterygota</taxon>
        <taxon>Diptera</taxon>
        <taxon>Nematocera</taxon>
        <taxon>Culicoidea</taxon>
        <taxon>Culicidae</taxon>
        <taxon>Culicinae</taxon>
        <taxon>Culicini</taxon>
        <taxon>Culex</taxon>
        <taxon>Culex</taxon>
    </lineage>
</organism>
<feature type="chain" id="PRO_0000364241" description="Eukaryotic translation initiation factor 3 subunit L">
    <location>
        <begin position="1"/>
        <end position="537"/>
    </location>
</feature>
<feature type="domain" description="PCI" evidence="2">
    <location>
        <begin position="300"/>
        <end position="512"/>
    </location>
</feature>
<dbReference type="EMBL" id="DS232049">
    <property type="protein sequence ID" value="EDS33116.1"/>
    <property type="molecule type" value="Genomic_DNA"/>
</dbReference>
<dbReference type="SMR" id="B0WR18"/>
<dbReference type="FunCoup" id="B0WR18">
    <property type="interactions" value="1952"/>
</dbReference>
<dbReference type="STRING" id="7176.B0WR18"/>
<dbReference type="EnsemblMetazoa" id="CPIJ009242-RA">
    <property type="protein sequence ID" value="CPIJ009242-PA"/>
    <property type="gene ID" value="CPIJ009242"/>
</dbReference>
<dbReference type="EnsemblMetazoa" id="CQUJHB007280.R11203">
    <property type="protein sequence ID" value="CQUJHB007280.P11203"/>
    <property type="gene ID" value="CQUJHB007280"/>
</dbReference>
<dbReference type="EnsemblMetazoa" id="XM_001851100.2">
    <property type="protein sequence ID" value="XP_001851152.1"/>
    <property type="gene ID" value="LOC6041977"/>
</dbReference>
<dbReference type="KEGG" id="cqu:CpipJ_CPIJ009242"/>
<dbReference type="CTD" id="51386"/>
<dbReference type="VEuPathDB" id="VectorBase:CPIJ009242"/>
<dbReference type="VEuPathDB" id="VectorBase:CQUJHB007280"/>
<dbReference type="eggNOG" id="KOG3677">
    <property type="taxonomic scope" value="Eukaryota"/>
</dbReference>
<dbReference type="HOGENOM" id="CLU_029210_0_1_1"/>
<dbReference type="InParanoid" id="B0WR18"/>
<dbReference type="OMA" id="AGWFIRN"/>
<dbReference type="OrthoDB" id="15082at2759"/>
<dbReference type="PhylomeDB" id="B0WR18"/>
<dbReference type="Proteomes" id="UP000002320">
    <property type="component" value="Unassembled WGS sequence"/>
</dbReference>
<dbReference type="GO" id="GO:0016282">
    <property type="term" value="C:eukaryotic 43S preinitiation complex"/>
    <property type="evidence" value="ECO:0007669"/>
    <property type="project" value="UniProtKB-UniRule"/>
</dbReference>
<dbReference type="GO" id="GO:0033290">
    <property type="term" value="C:eukaryotic 48S preinitiation complex"/>
    <property type="evidence" value="ECO:0007669"/>
    <property type="project" value="UniProtKB-UniRule"/>
</dbReference>
<dbReference type="GO" id="GO:0005852">
    <property type="term" value="C:eukaryotic translation initiation factor 3 complex"/>
    <property type="evidence" value="ECO:0007669"/>
    <property type="project" value="UniProtKB-UniRule"/>
</dbReference>
<dbReference type="GO" id="GO:0003743">
    <property type="term" value="F:translation initiation factor activity"/>
    <property type="evidence" value="ECO:0007669"/>
    <property type="project" value="UniProtKB-UniRule"/>
</dbReference>
<dbReference type="GO" id="GO:0001732">
    <property type="term" value="P:formation of cytoplasmic translation initiation complex"/>
    <property type="evidence" value="ECO:0007669"/>
    <property type="project" value="UniProtKB-UniRule"/>
</dbReference>
<dbReference type="HAMAP" id="MF_03011">
    <property type="entry name" value="eIF3l"/>
    <property type="match status" value="1"/>
</dbReference>
<dbReference type="InterPro" id="IPR019382">
    <property type="entry name" value="eIF3l"/>
</dbReference>
<dbReference type="InterPro" id="IPR000717">
    <property type="entry name" value="PCI_dom"/>
</dbReference>
<dbReference type="InterPro" id="IPR011990">
    <property type="entry name" value="TPR-like_helical_dom_sf"/>
</dbReference>
<dbReference type="PANTHER" id="PTHR13242">
    <property type="entry name" value="EUKARYOTIC TRANSLATION INITIATION FACTOR 3"/>
    <property type="match status" value="1"/>
</dbReference>
<dbReference type="PANTHER" id="PTHR13242:SF0">
    <property type="entry name" value="EUKARYOTIC TRANSLATION INITIATION FACTOR 3 SUBUNIT L"/>
    <property type="match status" value="1"/>
</dbReference>
<dbReference type="Pfam" id="PF10255">
    <property type="entry name" value="Paf67"/>
    <property type="match status" value="1"/>
</dbReference>
<dbReference type="SUPFAM" id="SSF48452">
    <property type="entry name" value="TPR-like"/>
    <property type="match status" value="1"/>
</dbReference>
<dbReference type="PROSITE" id="PS50250">
    <property type="entry name" value="PCI"/>
    <property type="match status" value="1"/>
</dbReference>